<name>RPOY_BACAN</name>
<protein>
    <recommendedName>
        <fullName evidence="1">DNA-directed RNA polymerase subunit epsilon</fullName>
        <shortName evidence="1">RNAP epsilon subunit</shortName>
        <ecNumber evidence="1">2.7.7.6</ecNumber>
    </recommendedName>
    <alternativeName>
        <fullName evidence="1">RNA polymerase epsilon subunit</fullName>
    </alternativeName>
    <alternativeName>
        <fullName evidence="1">Transcriptase subunit epsilon</fullName>
    </alternativeName>
</protein>
<proteinExistence type="inferred from homology"/>
<accession>Q81MQ7</accession>
<accession>Q6HU52</accession>
<accession>Q6KND5</accession>
<keyword id="KW-0240">DNA-directed RNA polymerase</keyword>
<keyword id="KW-0548">Nucleotidyltransferase</keyword>
<keyword id="KW-1185">Reference proteome</keyword>
<keyword id="KW-0804">Transcription</keyword>
<keyword id="KW-0808">Transferase</keyword>
<feature type="chain" id="PRO_0000163114" description="DNA-directed RNA polymerase subunit epsilon">
    <location>
        <begin position="1"/>
        <end position="70"/>
    </location>
</feature>
<organism>
    <name type="scientific">Bacillus anthracis</name>
    <dbReference type="NCBI Taxonomy" id="1392"/>
    <lineage>
        <taxon>Bacteria</taxon>
        <taxon>Bacillati</taxon>
        <taxon>Bacillota</taxon>
        <taxon>Bacilli</taxon>
        <taxon>Bacillales</taxon>
        <taxon>Bacillaceae</taxon>
        <taxon>Bacillus</taxon>
        <taxon>Bacillus cereus group</taxon>
    </lineage>
</organism>
<sequence>MIFKVFYQEKMTEVPVRENTKVLYLEATSEKDVRTKLNKFAYNIEFVQSVTGNHLEYEKANADLTLAEIV</sequence>
<evidence type="ECO:0000255" key="1">
    <source>
        <dbReference type="HAMAP-Rule" id="MF_01553"/>
    </source>
</evidence>
<gene>
    <name evidence="1" type="primary">rpoY</name>
    <name type="ordered locus">BA_4189</name>
    <name type="ordered locus">GBAA_4189</name>
    <name type="ordered locus">BAS3886</name>
</gene>
<dbReference type="EC" id="2.7.7.6" evidence="1"/>
<dbReference type="EMBL" id="AE016879">
    <property type="protein sequence ID" value="AAP27911.1"/>
    <property type="molecule type" value="Genomic_DNA"/>
</dbReference>
<dbReference type="EMBL" id="AE017334">
    <property type="protein sequence ID" value="AAT33308.1"/>
    <property type="molecule type" value="Genomic_DNA"/>
</dbReference>
<dbReference type="EMBL" id="AE017225">
    <property type="protein sequence ID" value="AAT56187.1"/>
    <property type="molecule type" value="Genomic_DNA"/>
</dbReference>
<dbReference type="RefSeq" id="NP_846425.1">
    <property type="nucleotide sequence ID" value="NC_003997.3"/>
</dbReference>
<dbReference type="RefSeq" id="WP_000576443.1">
    <property type="nucleotide sequence ID" value="NZ_WXXJ01000027.1"/>
</dbReference>
<dbReference type="RefSeq" id="YP_030136.1">
    <property type="nucleotide sequence ID" value="NC_005945.1"/>
</dbReference>
<dbReference type="SMR" id="Q81MQ7"/>
<dbReference type="STRING" id="261594.GBAA_4189"/>
<dbReference type="DNASU" id="1088867"/>
<dbReference type="GeneID" id="45023864"/>
<dbReference type="KEGG" id="ban:BA_4189"/>
<dbReference type="KEGG" id="bar:GBAA_4189"/>
<dbReference type="KEGG" id="bat:BAS3886"/>
<dbReference type="PATRIC" id="fig|198094.11.peg.4158"/>
<dbReference type="eggNOG" id="COG5503">
    <property type="taxonomic scope" value="Bacteria"/>
</dbReference>
<dbReference type="HOGENOM" id="CLU_187518_0_0_9"/>
<dbReference type="OMA" id="MIFKVYF"/>
<dbReference type="OrthoDB" id="2147503at2"/>
<dbReference type="Proteomes" id="UP000000427">
    <property type="component" value="Chromosome"/>
</dbReference>
<dbReference type="Proteomes" id="UP000000594">
    <property type="component" value="Chromosome"/>
</dbReference>
<dbReference type="GO" id="GO:0000428">
    <property type="term" value="C:DNA-directed RNA polymerase complex"/>
    <property type="evidence" value="ECO:0007669"/>
    <property type="project" value="UniProtKB-KW"/>
</dbReference>
<dbReference type="GO" id="GO:0003677">
    <property type="term" value="F:DNA binding"/>
    <property type="evidence" value="ECO:0007669"/>
    <property type="project" value="UniProtKB-UniRule"/>
</dbReference>
<dbReference type="GO" id="GO:0003899">
    <property type="term" value="F:DNA-directed RNA polymerase activity"/>
    <property type="evidence" value="ECO:0007669"/>
    <property type="project" value="UniProtKB-UniRule"/>
</dbReference>
<dbReference type="GO" id="GO:0006351">
    <property type="term" value="P:DNA-templated transcription"/>
    <property type="evidence" value="ECO:0007669"/>
    <property type="project" value="UniProtKB-UniRule"/>
</dbReference>
<dbReference type="Gene3D" id="3.10.20.730">
    <property type="entry name" value="RNAP, epsilon subunit-like"/>
    <property type="match status" value="1"/>
</dbReference>
<dbReference type="HAMAP" id="MF_01553">
    <property type="entry name" value="RNApol_bact_RpoY"/>
    <property type="match status" value="1"/>
</dbReference>
<dbReference type="InterPro" id="IPR009907">
    <property type="entry name" value="RpoY"/>
</dbReference>
<dbReference type="NCBIfam" id="NF010188">
    <property type="entry name" value="PRK13667.1"/>
    <property type="match status" value="1"/>
</dbReference>
<dbReference type="Pfam" id="PF07288">
    <property type="entry name" value="RpoY"/>
    <property type="match status" value="1"/>
</dbReference>
<comment type="function">
    <text evidence="1">A non-essential component of RNA polymerase (RNAP).</text>
</comment>
<comment type="catalytic activity">
    <reaction evidence="1">
        <text>RNA(n) + a ribonucleoside 5'-triphosphate = RNA(n+1) + diphosphate</text>
        <dbReference type="Rhea" id="RHEA:21248"/>
        <dbReference type="Rhea" id="RHEA-COMP:14527"/>
        <dbReference type="Rhea" id="RHEA-COMP:17342"/>
        <dbReference type="ChEBI" id="CHEBI:33019"/>
        <dbReference type="ChEBI" id="CHEBI:61557"/>
        <dbReference type="ChEBI" id="CHEBI:140395"/>
        <dbReference type="EC" id="2.7.7.6"/>
    </reaction>
</comment>
<comment type="subunit">
    <text evidence="1">RNAP is composed of a core of 2 alpha, a beta and a beta' subunit. The core is associated with a delta subunit, and at least one of epsilon or omega. When a sigma factor is associated with the core the holoenzyme is formed, which can initiate transcription.</text>
</comment>
<comment type="similarity">
    <text evidence="1">Belongs to the RNA polymerase subunit epsilon family.</text>
</comment>
<reference key="1">
    <citation type="journal article" date="2003" name="Nature">
        <title>The genome sequence of Bacillus anthracis Ames and comparison to closely related bacteria.</title>
        <authorList>
            <person name="Read T.D."/>
            <person name="Peterson S.N."/>
            <person name="Tourasse N.J."/>
            <person name="Baillie L.W."/>
            <person name="Paulsen I.T."/>
            <person name="Nelson K.E."/>
            <person name="Tettelin H."/>
            <person name="Fouts D.E."/>
            <person name="Eisen J.A."/>
            <person name="Gill S.R."/>
            <person name="Holtzapple E.K."/>
            <person name="Okstad O.A."/>
            <person name="Helgason E."/>
            <person name="Rilstone J."/>
            <person name="Wu M."/>
            <person name="Kolonay J.F."/>
            <person name="Beanan M.J."/>
            <person name="Dodson R.J."/>
            <person name="Brinkac L.M."/>
            <person name="Gwinn M.L."/>
            <person name="DeBoy R.T."/>
            <person name="Madpu R."/>
            <person name="Daugherty S.C."/>
            <person name="Durkin A.S."/>
            <person name="Haft D.H."/>
            <person name="Nelson W.C."/>
            <person name="Peterson J.D."/>
            <person name="Pop M."/>
            <person name="Khouri H.M."/>
            <person name="Radune D."/>
            <person name="Benton J.L."/>
            <person name="Mahamoud Y."/>
            <person name="Jiang L."/>
            <person name="Hance I.R."/>
            <person name="Weidman J.F."/>
            <person name="Berry K.J."/>
            <person name="Plaut R.D."/>
            <person name="Wolf A.M."/>
            <person name="Watkins K.L."/>
            <person name="Nierman W.C."/>
            <person name="Hazen A."/>
            <person name="Cline R.T."/>
            <person name="Redmond C."/>
            <person name="Thwaite J.E."/>
            <person name="White O."/>
            <person name="Salzberg S.L."/>
            <person name="Thomason B."/>
            <person name="Friedlander A.M."/>
            <person name="Koehler T.M."/>
            <person name="Hanna P.C."/>
            <person name="Kolstoe A.-B."/>
            <person name="Fraser C.M."/>
        </authorList>
    </citation>
    <scope>NUCLEOTIDE SEQUENCE [LARGE SCALE GENOMIC DNA]</scope>
    <source>
        <strain>Ames / isolate Porton</strain>
    </source>
</reference>
<reference key="2">
    <citation type="journal article" date="2009" name="J. Bacteriol.">
        <title>The complete genome sequence of Bacillus anthracis Ames 'Ancestor'.</title>
        <authorList>
            <person name="Ravel J."/>
            <person name="Jiang L."/>
            <person name="Stanley S.T."/>
            <person name="Wilson M.R."/>
            <person name="Decker R.S."/>
            <person name="Read T.D."/>
            <person name="Worsham P."/>
            <person name="Keim P.S."/>
            <person name="Salzberg S.L."/>
            <person name="Fraser-Liggett C.M."/>
            <person name="Rasko D.A."/>
        </authorList>
    </citation>
    <scope>NUCLEOTIDE SEQUENCE [LARGE SCALE GENOMIC DNA]</scope>
    <source>
        <strain>Ames ancestor</strain>
    </source>
</reference>
<reference key="3">
    <citation type="submission" date="2004-01" db="EMBL/GenBank/DDBJ databases">
        <title>Complete genome sequence of Bacillus anthracis Sterne.</title>
        <authorList>
            <person name="Brettin T.S."/>
            <person name="Bruce D."/>
            <person name="Challacombe J.F."/>
            <person name="Gilna P."/>
            <person name="Han C."/>
            <person name="Hill K."/>
            <person name="Hitchcock P."/>
            <person name="Jackson P."/>
            <person name="Keim P."/>
            <person name="Longmire J."/>
            <person name="Lucas S."/>
            <person name="Okinaka R."/>
            <person name="Richardson P."/>
            <person name="Rubin E."/>
            <person name="Tice H."/>
        </authorList>
    </citation>
    <scope>NUCLEOTIDE SEQUENCE [LARGE SCALE GENOMIC DNA]</scope>
    <source>
        <strain>Sterne</strain>
    </source>
</reference>